<reference key="1">
    <citation type="journal article" date="2004" name="Nature">
        <title>Genome evolution in yeasts.</title>
        <authorList>
            <person name="Dujon B."/>
            <person name="Sherman D."/>
            <person name="Fischer G."/>
            <person name="Durrens P."/>
            <person name="Casaregola S."/>
            <person name="Lafontaine I."/>
            <person name="de Montigny J."/>
            <person name="Marck C."/>
            <person name="Neuveglise C."/>
            <person name="Talla E."/>
            <person name="Goffard N."/>
            <person name="Frangeul L."/>
            <person name="Aigle M."/>
            <person name="Anthouard V."/>
            <person name="Babour A."/>
            <person name="Barbe V."/>
            <person name="Barnay S."/>
            <person name="Blanchin S."/>
            <person name="Beckerich J.-M."/>
            <person name="Beyne E."/>
            <person name="Bleykasten C."/>
            <person name="Boisrame A."/>
            <person name="Boyer J."/>
            <person name="Cattolico L."/>
            <person name="Confanioleri F."/>
            <person name="de Daruvar A."/>
            <person name="Despons L."/>
            <person name="Fabre E."/>
            <person name="Fairhead C."/>
            <person name="Ferry-Dumazet H."/>
            <person name="Groppi A."/>
            <person name="Hantraye F."/>
            <person name="Hennequin C."/>
            <person name="Jauniaux N."/>
            <person name="Joyet P."/>
            <person name="Kachouri R."/>
            <person name="Kerrest A."/>
            <person name="Koszul R."/>
            <person name="Lemaire M."/>
            <person name="Lesur I."/>
            <person name="Ma L."/>
            <person name="Muller H."/>
            <person name="Nicaud J.-M."/>
            <person name="Nikolski M."/>
            <person name="Oztas S."/>
            <person name="Ozier-Kalogeropoulos O."/>
            <person name="Pellenz S."/>
            <person name="Potier S."/>
            <person name="Richard G.-F."/>
            <person name="Straub M.-L."/>
            <person name="Suleau A."/>
            <person name="Swennen D."/>
            <person name="Tekaia F."/>
            <person name="Wesolowski-Louvel M."/>
            <person name="Westhof E."/>
            <person name="Wirth B."/>
            <person name="Zeniou-Meyer M."/>
            <person name="Zivanovic Y."/>
            <person name="Bolotin-Fukuhara M."/>
            <person name="Thierry A."/>
            <person name="Bouchier C."/>
            <person name="Caudron B."/>
            <person name="Scarpelli C."/>
            <person name="Gaillardin C."/>
            <person name="Weissenbach J."/>
            <person name="Wincker P."/>
            <person name="Souciet J.-L."/>
        </authorList>
    </citation>
    <scope>NUCLEOTIDE SEQUENCE [LARGE SCALE GENOMIC DNA]</scope>
    <source>
        <strain>ATCC 36239 / CBS 767 / BCRC 21394 / JCM 1990 / NBRC 0083 / IGC 2968</strain>
    </source>
</reference>
<gene>
    <name evidence="1" type="primary">MET3</name>
    <name type="ordered locus">DEHA2D06138g</name>
</gene>
<accession>Q6BSU5</accession>
<feature type="chain" id="PRO_0000283685" description="Sulfate adenylyltransferase">
    <location>
        <begin position="1"/>
        <end position="530"/>
    </location>
</feature>
<feature type="region of interest" description="N-terminal" evidence="1">
    <location>
        <begin position="1"/>
        <end position="178"/>
    </location>
</feature>
<feature type="region of interest" description="Catalytic" evidence="1">
    <location>
        <begin position="179"/>
        <end position="410"/>
    </location>
</feature>
<feature type="region of interest" description="Required for oligomerization; adenylyl-sulfate kinase-like" evidence="1">
    <location>
        <begin position="411"/>
        <end position="530"/>
    </location>
</feature>
<feature type="active site" evidence="1">
    <location>
        <position position="209"/>
    </location>
</feature>
<feature type="active site" evidence="1">
    <location>
        <position position="210"/>
    </location>
</feature>
<feature type="active site" evidence="1">
    <location>
        <position position="211"/>
    </location>
</feature>
<feature type="binding site" evidence="1">
    <location>
        <begin position="208"/>
        <end position="211"/>
    </location>
    <ligand>
        <name>ATP</name>
        <dbReference type="ChEBI" id="CHEBI:30616"/>
    </ligand>
</feature>
<feature type="binding site" evidence="1">
    <location>
        <position position="208"/>
    </location>
    <ligand>
        <name>sulfate</name>
        <dbReference type="ChEBI" id="CHEBI:16189"/>
    </ligand>
</feature>
<feature type="binding site" evidence="1">
    <location>
        <position position="210"/>
    </location>
    <ligand>
        <name>sulfate</name>
        <dbReference type="ChEBI" id="CHEBI:16189"/>
    </ligand>
</feature>
<feature type="binding site" evidence="1">
    <location>
        <begin position="304"/>
        <end position="307"/>
    </location>
    <ligand>
        <name>ATP</name>
        <dbReference type="ChEBI" id="CHEBI:30616"/>
    </ligand>
</feature>
<feature type="binding site" evidence="1">
    <location>
        <position position="308"/>
    </location>
    <ligand>
        <name>sulfate</name>
        <dbReference type="ChEBI" id="CHEBI:16189"/>
    </ligand>
</feature>
<feature type="binding site" evidence="1">
    <location>
        <position position="348"/>
    </location>
    <ligand>
        <name>ATP</name>
        <dbReference type="ChEBI" id="CHEBI:30616"/>
    </ligand>
</feature>
<feature type="site" description="Transition state stabilizer" evidence="1">
    <location>
        <position position="214"/>
    </location>
</feature>
<feature type="site" description="Transition state stabilizer" evidence="1">
    <location>
        <position position="217"/>
    </location>
</feature>
<feature type="site" description="Induces change in substrate recognition on ATP binding" evidence="1">
    <location>
        <position position="345"/>
    </location>
</feature>
<comment type="function">
    <text evidence="1">Catalyzes the first intracellular reaction of sulfate assimilation, forming adenosine-5'-phosphosulfate (APS) from inorganic sulfate and ATP. Plays an important role in sulfate activation as a component of the biosynthesis pathway of sulfur-containing amino acids.</text>
</comment>
<comment type="catalytic activity">
    <reaction evidence="1">
        <text>sulfate + ATP + H(+) = adenosine 5'-phosphosulfate + diphosphate</text>
        <dbReference type="Rhea" id="RHEA:18133"/>
        <dbReference type="ChEBI" id="CHEBI:15378"/>
        <dbReference type="ChEBI" id="CHEBI:16189"/>
        <dbReference type="ChEBI" id="CHEBI:30616"/>
        <dbReference type="ChEBI" id="CHEBI:33019"/>
        <dbReference type="ChEBI" id="CHEBI:58243"/>
        <dbReference type="EC" id="2.7.7.4"/>
    </reaction>
</comment>
<comment type="pathway">
    <text evidence="1">Sulfur metabolism; hydrogen sulfide biosynthesis; sulfite from sulfate: step 1/3.</text>
</comment>
<comment type="subunit">
    <text evidence="1">Homohexamer. Dimer of trimers.</text>
</comment>
<comment type="subcellular location">
    <subcellularLocation>
        <location evidence="1">Cytoplasm</location>
    </subcellularLocation>
</comment>
<comment type="domain">
    <text evidence="1">The oligomerization domain is distantly related to APS kinases, but it is not functional and does not bind APS. It is required for oligomerization of the enzyme, although the oligomerization state has no effect on the catalytic activity of the enzyme.</text>
</comment>
<comment type="similarity">
    <text evidence="1">Belongs to the sulfate adenylyltransferase family.</text>
</comment>
<keyword id="KW-0028">Amino-acid biosynthesis</keyword>
<keyword id="KW-0067">ATP-binding</keyword>
<keyword id="KW-0198">Cysteine biosynthesis</keyword>
<keyword id="KW-0963">Cytoplasm</keyword>
<keyword id="KW-0486">Methionine biosynthesis</keyword>
<keyword id="KW-0547">Nucleotide-binding</keyword>
<keyword id="KW-0548">Nucleotidyltransferase</keyword>
<keyword id="KW-1185">Reference proteome</keyword>
<keyword id="KW-0808">Transferase</keyword>
<protein>
    <recommendedName>
        <fullName evidence="1">Sulfate adenylyltransferase</fullName>
        <ecNumber evidence="1">2.7.7.4</ecNumber>
    </recommendedName>
    <alternativeName>
        <fullName evidence="1">ATP-sulfurylase</fullName>
    </alternativeName>
    <alternativeName>
        <fullName evidence="1">Sulfate adenylate transferase</fullName>
        <shortName evidence="1">SAT</shortName>
    </alternativeName>
</protein>
<sequence>MPIPAPHGGKLQDLVIRDSSIRSDLFKEIADKKYKTLTLSPRQLCDLELILNGGFSPLTGFLNEEDYNSVVHDMRLSSVKNEKNGKGLLWSMPITLDVGQEFAGKLSKGEKIVLKDLRDEKPLALLTVETVYKPNKQTEAEKVFRGDPEHPAIKYLFETAQEFYVGGSIQGLDYPTHYDYIPFRKTPTELREEFSKLGWDQQKVVAFQTRNPMHRAHRELTVRAANDLGSDGHILIHPVVGLTKPGDIDHHTRVRVYQQILKKYPDGLATLSLLPLAMRMGGDREAMWHSLIRMNYGVDHFIVGRDHAGPGSNSKGVDFYGPYDAQELLAKYKDELEPKIKVVPFRMVTYLPDEDRYAPIDTIDTSKVNTANISGTELRQRLRDGTEIPGWFSYPEVVKVLRESNPPRSKQGFAIVIDSSDSKQGEYLSFALQSTLNQFSGERRITKLSSEQATPFIVNELVKSGSGVIVPTKSNQSDIIKAVGSGNSIIVNFNGEQNADQGIFSLKEDLTSVIGEIVEYLVSQGFYQQS</sequence>
<name>MET3_DEBHA</name>
<evidence type="ECO:0000255" key="1">
    <source>
        <dbReference type="HAMAP-Rule" id="MF_03106"/>
    </source>
</evidence>
<organism>
    <name type="scientific">Debaryomyces hansenii (strain ATCC 36239 / CBS 767 / BCRC 21394 / JCM 1990 / NBRC 0083 / IGC 2968)</name>
    <name type="common">Yeast</name>
    <name type="synonym">Torulaspora hansenii</name>
    <dbReference type="NCBI Taxonomy" id="284592"/>
    <lineage>
        <taxon>Eukaryota</taxon>
        <taxon>Fungi</taxon>
        <taxon>Dikarya</taxon>
        <taxon>Ascomycota</taxon>
        <taxon>Saccharomycotina</taxon>
        <taxon>Pichiomycetes</taxon>
        <taxon>Debaryomycetaceae</taxon>
        <taxon>Debaryomyces</taxon>
    </lineage>
</organism>
<dbReference type="EC" id="2.7.7.4" evidence="1"/>
<dbReference type="EMBL" id="CR382136">
    <property type="protein sequence ID" value="CAG86869.1"/>
    <property type="molecule type" value="Genomic_DNA"/>
</dbReference>
<dbReference type="RefSeq" id="XP_458725.1">
    <property type="nucleotide sequence ID" value="XM_458725.2"/>
</dbReference>
<dbReference type="SMR" id="Q6BSU5"/>
<dbReference type="FunCoup" id="Q6BSU5">
    <property type="interactions" value="600"/>
</dbReference>
<dbReference type="STRING" id="284592.Q6BSU5"/>
<dbReference type="GeneID" id="2901244"/>
<dbReference type="KEGG" id="dha:DEHA2D06138g"/>
<dbReference type="VEuPathDB" id="FungiDB:DEHA2D06138g"/>
<dbReference type="eggNOG" id="KOG0636">
    <property type="taxonomic scope" value="Eukaryota"/>
</dbReference>
<dbReference type="HOGENOM" id="CLU_022950_0_0_1"/>
<dbReference type="InParanoid" id="Q6BSU5"/>
<dbReference type="OMA" id="EWFSFPE"/>
<dbReference type="OrthoDB" id="468at2759"/>
<dbReference type="UniPathway" id="UPA00140">
    <property type="reaction ID" value="UER00204"/>
</dbReference>
<dbReference type="Proteomes" id="UP000000599">
    <property type="component" value="Chromosome D"/>
</dbReference>
<dbReference type="GO" id="GO:0005737">
    <property type="term" value="C:cytoplasm"/>
    <property type="evidence" value="ECO:0007669"/>
    <property type="project" value="UniProtKB-SubCell"/>
</dbReference>
<dbReference type="GO" id="GO:0005524">
    <property type="term" value="F:ATP binding"/>
    <property type="evidence" value="ECO:0007669"/>
    <property type="project" value="UniProtKB-KW"/>
</dbReference>
<dbReference type="GO" id="GO:0004781">
    <property type="term" value="F:sulfate adenylyltransferase (ATP) activity"/>
    <property type="evidence" value="ECO:0007669"/>
    <property type="project" value="UniProtKB-UniRule"/>
</dbReference>
<dbReference type="GO" id="GO:0019344">
    <property type="term" value="P:cysteine biosynthetic process"/>
    <property type="evidence" value="ECO:0007669"/>
    <property type="project" value="UniProtKB-KW"/>
</dbReference>
<dbReference type="GO" id="GO:0070814">
    <property type="term" value="P:hydrogen sulfide biosynthetic process"/>
    <property type="evidence" value="ECO:0007669"/>
    <property type="project" value="UniProtKB-UniRule"/>
</dbReference>
<dbReference type="GO" id="GO:0009086">
    <property type="term" value="P:methionine biosynthetic process"/>
    <property type="evidence" value="ECO:0007669"/>
    <property type="project" value="UniProtKB-KW"/>
</dbReference>
<dbReference type="GO" id="GO:0010134">
    <property type="term" value="P:sulfate assimilation via adenylyl sulfate reduction"/>
    <property type="evidence" value="ECO:0007669"/>
    <property type="project" value="TreeGrafter"/>
</dbReference>
<dbReference type="GO" id="GO:0019379">
    <property type="term" value="P:sulfate assimilation, phosphoadenylyl sulfate reduction by phosphoadenylyl-sulfate reductase (thioredoxin)"/>
    <property type="evidence" value="ECO:0007669"/>
    <property type="project" value="EnsemblFungi"/>
</dbReference>
<dbReference type="CDD" id="cd00517">
    <property type="entry name" value="ATPS"/>
    <property type="match status" value="1"/>
</dbReference>
<dbReference type="FunFam" id="3.40.50.620:FF:000052">
    <property type="entry name" value="Sulfate adenylyltransferase"/>
    <property type="match status" value="1"/>
</dbReference>
<dbReference type="Gene3D" id="3.40.50.620">
    <property type="entry name" value="HUPs"/>
    <property type="match status" value="1"/>
</dbReference>
<dbReference type="Gene3D" id="3.40.50.300">
    <property type="entry name" value="P-loop containing nucleotide triphosphate hydrolases"/>
    <property type="match status" value="1"/>
</dbReference>
<dbReference type="Gene3D" id="3.10.400.10">
    <property type="entry name" value="Sulfate adenylyltransferase"/>
    <property type="match status" value="1"/>
</dbReference>
<dbReference type="HAMAP" id="MF_03106">
    <property type="entry name" value="Sulf_adenylyltr_euk"/>
    <property type="match status" value="1"/>
</dbReference>
<dbReference type="InterPro" id="IPR025980">
    <property type="entry name" value="ATP-Sase_PUA-like_dom"/>
</dbReference>
<dbReference type="InterPro" id="IPR027417">
    <property type="entry name" value="P-loop_NTPase"/>
</dbReference>
<dbReference type="InterPro" id="IPR015947">
    <property type="entry name" value="PUA-like_sf"/>
</dbReference>
<dbReference type="InterPro" id="IPR014729">
    <property type="entry name" value="Rossmann-like_a/b/a_fold"/>
</dbReference>
<dbReference type="InterPro" id="IPR027535">
    <property type="entry name" value="Sulf_adenylyltr_euk"/>
</dbReference>
<dbReference type="InterPro" id="IPR050512">
    <property type="entry name" value="Sulf_AdTrans/APS_kinase"/>
</dbReference>
<dbReference type="InterPro" id="IPR024951">
    <property type="entry name" value="Sulfurylase_cat_dom"/>
</dbReference>
<dbReference type="InterPro" id="IPR002650">
    <property type="entry name" value="Sulphate_adenylyltransferase"/>
</dbReference>
<dbReference type="NCBIfam" id="TIGR00339">
    <property type="entry name" value="sopT"/>
    <property type="match status" value="1"/>
</dbReference>
<dbReference type="PANTHER" id="PTHR42700">
    <property type="entry name" value="SULFATE ADENYLYLTRANSFERASE"/>
    <property type="match status" value="1"/>
</dbReference>
<dbReference type="PANTHER" id="PTHR42700:SF1">
    <property type="entry name" value="SULFATE ADENYLYLTRANSFERASE"/>
    <property type="match status" value="1"/>
</dbReference>
<dbReference type="Pfam" id="PF01747">
    <property type="entry name" value="ATP-sulfurylase"/>
    <property type="match status" value="1"/>
</dbReference>
<dbReference type="Pfam" id="PF14306">
    <property type="entry name" value="PUA_2"/>
    <property type="match status" value="1"/>
</dbReference>
<dbReference type="SUPFAM" id="SSF52374">
    <property type="entry name" value="Nucleotidylyl transferase"/>
    <property type="match status" value="1"/>
</dbReference>
<dbReference type="SUPFAM" id="SSF52540">
    <property type="entry name" value="P-loop containing nucleoside triphosphate hydrolases"/>
    <property type="match status" value="1"/>
</dbReference>
<dbReference type="SUPFAM" id="SSF88697">
    <property type="entry name" value="PUA domain-like"/>
    <property type="match status" value="1"/>
</dbReference>
<proteinExistence type="inferred from homology"/>